<keyword id="KW-0687">Ribonucleoprotein</keyword>
<keyword id="KW-0689">Ribosomal protein</keyword>
<sequence>MAVPQNRVTRSRRNMRRSHDALVAANPAECPNCGELKRPHHVCGACGHYDSREVVAVTAETDLDEDAA</sequence>
<dbReference type="EMBL" id="CP000661">
    <property type="protein sequence ID" value="ABP70801.1"/>
    <property type="molecule type" value="Genomic_DNA"/>
</dbReference>
<dbReference type="SMR" id="A4WTT7"/>
<dbReference type="STRING" id="349102.Rsph17025_1910"/>
<dbReference type="KEGG" id="rsq:Rsph17025_1910"/>
<dbReference type="eggNOG" id="COG0333">
    <property type="taxonomic scope" value="Bacteria"/>
</dbReference>
<dbReference type="HOGENOM" id="CLU_129084_1_3_5"/>
<dbReference type="BioCyc" id="RSPH349102:G1G8M-1975-MONOMER"/>
<dbReference type="GO" id="GO:0015934">
    <property type="term" value="C:large ribosomal subunit"/>
    <property type="evidence" value="ECO:0007669"/>
    <property type="project" value="InterPro"/>
</dbReference>
<dbReference type="GO" id="GO:0003735">
    <property type="term" value="F:structural constituent of ribosome"/>
    <property type="evidence" value="ECO:0007669"/>
    <property type="project" value="InterPro"/>
</dbReference>
<dbReference type="GO" id="GO:0006412">
    <property type="term" value="P:translation"/>
    <property type="evidence" value="ECO:0007669"/>
    <property type="project" value="UniProtKB-UniRule"/>
</dbReference>
<dbReference type="Gene3D" id="1.20.5.640">
    <property type="entry name" value="Single helix bin"/>
    <property type="match status" value="1"/>
</dbReference>
<dbReference type="HAMAP" id="MF_00340">
    <property type="entry name" value="Ribosomal_bL32"/>
    <property type="match status" value="1"/>
</dbReference>
<dbReference type="InterPro" id="IPR002677">
    <property type="entry name" value="Ribosomal_bL32"/>
</dbReference>
<dbReference type="InterPro" id="IPR044957">
    <property type="entry name" value="Ribosomal_bL32_bact"/>
</dbReference>
<dbReference type="InterPro" id="IPR011332">
    <property type="entry name" value="Ribosomal_zn-bd"/>
</dbReference>
<dbReference type="NCBIfam" id="TIGR01031">
    <property type="entry name" value="rpmF_bact"/>
    <property type="match status" value="1"/>
</dbReference>
<dbReference type="PANTHER" id="PTHR35534">
    <property type="entry name" value="50S RIBOSOMAL PROTEIN L32"/>
    <property type="match status" value="1"/>
</dbReference>
<dbReference type="PANTHER" id="PTHR35534:SF1">
    <property type="entry name" value="LARGE RIBOSOMAL SUBUNIT PROTEIN BL32"/>
    <property type="match status" value="1"/>
</dbReference>
<dbReference type="Pfam" id="PF01783">
    <property type="entry name" value="Ribosomal_L32p"/>
    <property type="match status" value="1"/>
</dbReference>
<dbReference type="SUPFAM" id="SSF57829">
    <property type="entry name" value="Zn-binding ribosomal proteins"/>
    <property type="match status" value="1"/>
</dbReference>
<comment type="similarity">
    <text evidence="1">Belongs to the bacterial ribosomal protein bL32 family.</text>
</comment>
<feature type="chain" id="PRO_1000005072" description="Large ribosomal subunit protein bL32">
    <location>
        <begin position="1"/>
        <end position="68"/>
    </location>
</feature>
<name>RL32_CERS5</name>
<organism>
    <name type="scientific">Cereibacter sphaeroides (strain ATCC 17025 / ATH 2.4.3)</name>
    <name type="common">Rhodobacter sphaeroides</name>
    <dbReference type="NCBI Taxonomy" id="349102"/>
    <lineage>
        <taxon>Bacteria</taxon>
        <taxon>Pseudomonadati</taxon>
        <taxon>Pseudomonadota</taxon>
        <taxon>Alphaproteobacteria</taxon>
        <taxon>Rhodobacterales</taxon>
        <taxon>Paracoccaceae</taxon>
        <taxon>Cereibacter</taxon>
    </lineage>
</organism>
<proteinExistence type="inferred from homology"/>
<protein>
    <recommendedName>
        <fullName evidence="1">Large ribosomal subunit protein bL32</fullName>
    </recommendedName>
    <alternativeName>
        <fullName evidence="2">50S ribosomal protein L32</fullName>
    </alternativeName>
</protein>
<accession>A4WTT7</accession>
<evidence type="ECO:0000255" key="1">
    <source>
        <dbReference type="HAMAP-Rule" id="MF_00340"/>
    </source>
</evidence>
<evidence type="ECO:0000305" key="2"/>
<reference key="1">
    <citation type="submission" date="2007-04" db="EMBL/GenBank/DDBJ databases">
        <title>Complete sequence of chromosome of Rhodobacter sphaeroides ATCC 17025.</title>
        <authorList>
            <consortium name="US DOE Joint Genome Institute"/>
            <person name="Copeland A."/>
            <person name="Lucas S."/>
            <person name="Lapidus A."/>
            <person name="Barry K."/>
            <person name="Detter J.C."/>
            <person name="Glavina del Rio T."/>
            <person name="Hammon N."/>
            <person name="Israni S."/>
            <person name="Dalin E."/>
            <person name="Tice H."/>
            <person name="Pitluck S."/>
            <person name="Chertkov O."/>
            <person name="Brettin T."/>
            <person name="Bruce D."/>
            <person name="Han C."/>
            <person name="Schmutz J."/>
            <person name="Larimer F."/>
            <person name="Land M."/>
            <person name="Hauser L."/>
            <person name="Kyrpides N."/>
            <person name="Kim E."/>
            <person name="Richardson P."/>
            <person name="Mackenzie C."/>
            <person name="Choudhary M."/>
            <person name="Donohue T.J."/>
            <person name="Kaplan S."/>
        </authorList>
    </citation>
    <scope>NUCLEOTIDE SEQUENCE [LARGE SCALE GENOMIC DNA]</scope>
    <source>
        <strain>ATCC 17025 / ATH 2.4.3</strain>
    </source>
</reference>
<gene>
    <name evidence="1" type="primary">rpmF</name>
    <name type="ordered locus">Rsph17025_1910</name>
</gene>